<keyword id="KW-0963">Cytoplasm</keyword>
<keyword id="KW-0460">Magnesium</keyword>
<keyword id="KW-0479">Metal-binding</keyword>
<keyword id="KW-0548">Nucleotidyltransferase</keyword>
<keyword id="KW-0694">RNA-binding</keyword>
<keyword id="KW-0808">Transferase</keyword>
<gene>
    <name evidence="1" type="primary">pnp</name>
    <name type="ordered locus">AAur_1570</name>
</gene>
<reference key="1">
    <citation type="journal article" date="2006" name="PLoS Genet.">
        <title>Secrets of soil survival revealed by the genome sequence of Arthrobacter aurescens TC1.</title>
        <authorList>
            <person name="Mongodin E.F."/>
            <person name="Shapir N."/>
            <person name="Daugherty S.C."/>
            <person name="DeBoy R.T."/>
            <person name="Emerson J.B."/>
            <person name="Shvartzbeyn A."/>
            <person name="Radune D."/>
            <person name="Vamathevan J."/>
            <person name="Riggs F."/>
            <person name="Grinberg V."/>
            <person name="Khouri H.M."/>
            <person name="Wackett L.P."/>
            <person name="Nelson K.E."/>
            <person name="Sadowsky M.J."/>
        </authorList>
    </citation>
    <scope>NUCLEOTIDE SEQUENCE [LARGE SCALE GENOMIC DNA]</scope>
    <source>
        <strain>TC1</strain>
    </source>
</reference>
<evidence type="ECO:0000255" key="1">
    <source>
        <dbReference type="HAMAP-Rule" id="MF_01595"/>
    </source>
</evidence>
<evidence type="ECO:0000256" key="2">
    <source>
        <dbReference type="SAM" id="MobiDB-lite"/>
    </source>
</evidence>
<sequence>MEGPEIQFSEAIIDNGRFGKRVIRFETGRLAKQAAGASMVYIDEDTALLSATTAGKQPREGFDFFPLTVDVEERMYAAGRIPGSFFRREGRPSTEAILACRLMDRPLRPAFVKGLRNEVQIVVTVLAINPDELYDVVAINASSMSTQLSGLPFSGPIGGVRVALIADEQGSQWVAFPKHSQLENAVFNMVVAGRIAGDDVAIMMVEAEATDNSWNLIKEQGATAPTEEVVSEGLEAAKPFIKALCEAQADLAARAAKPTVEFPVFLDYQDDVYAAVEAAAADKLAAVFQIADKQDRDNASDELKDEVLGALAGQFEGREKELSAAFRSVTKHVVRQRILKDQVRIDGRGLTDIRQLTAEVEVLPRVHGSAIFERGETQIMGVTTLNMLKMEQQIDSLSPVTRKRYMHNYNFPPYSTGETGRVGSPKRREIGHGALAERALVPVLPTREEFPYAIRQVSEALGSNGSTSMGSVCASTLSMLNAGVPLKAAVAGIAMGLVSDQVDGQTRYAALTDILGAEDAFGDMDFKVAGTSEFVTAIQLDTKLDGIPASVLAAALKQAREARLHILEVINAAIDTPDELSEFAPRVIAVKIPVDKIGEVIGPKGKMINQIQEDTGADISIEDDGTVYIGATNGPSADAARSAINAIANPQVPEIGERYLGTVVKTTTFGAFVSLTPGKDGLLHISELRKLANGKRVDNVDDVVSVGQKVQVEITKIDDRGKLSLSPVVAEEEGAASEDAPAEAAEESAE</sequence>
<feature type="chain" id="PRO_0000329504" description="Polyribonucleotide nucleotidyltransferase">
    <location>
        <begin position="1"/>
        <end position="750"/>
    </location>
</feature>
<feature type="domain" description="KH" evidence="1">
    <location>
        <begin position="585"/>
        <end position="644"/>
    </location>
</feature>
<feature type="domain" description="S1 motif" evidence="1">
    <location>
        <begin position="656"/>
        <end position="728"/>
    </location>
</feature>
<feature type="region of interest" description="Disordered" evidence="2">
    <location>
        <begin position="725"/>
        <end position="750"/>
    </location>
</feature>
<feature type="compositionally biased region" description="Acidic residues" evidence="2">
    <location>
        <begin position="730"/>
        <end position="750"/>
    </location>
</feature>
<feature type="binding site" evidence="1">
    <location>
        <position position="519"/>
    </location>
    <ligand>
        <name>Mg(2+)</name>
        <dbReference type="ChEBI" id="CHEBI:18420"/>
    </ligand>
</feature>
<feature type="binding site" evidence="1">
    <location>
        <position position="525"/>
    </location>
    <ligand>
        <name>Mg(2+)</name>
        <dbReference type="ChEBI" id="CHEBI:18420"/>
    </ligand>
</feature>
<proteinExistence type="inferred from homology"/>
<comment type="function">
    <text evidence="1">Involved in mRNA degradation. Catalyzes the phosphorolysis of single-stranded polyribonucleotides processively in the 3'- to 5'-direction.</text>
</comment>
<comment type="catalytic activity">
    <reaction evidence="1">
        <text>RNA(n+1) + phosphate = RNA(n) + a ribonucleoside 5'-diphosphate</text>
        <dbReference type="Rhea" id="RHEA:22096"/>
        <dbReference type="Rhea" id="RHEA-COMP:14527"/>
        <dbReference type="Rhea" id="RHEA-COMP:17342"/>
        <dbReference type="ChEBI" id="CHEBI:43474"/>
        <dbReference type="ChEBI" id="CHEBI:57930"/>
        <dbReference type="ChEBI" id="CHEBI:140395"/>
        <dbReference type="EC" id="2.7.7.8"/>
    </reaction>
</comment>
<comment type="cofactor">
    <cofactor evidence="1">
        <name>Mg(2+)</name>
        <dbReference type="ChEBI" id="CHEBI:18420"/>
    </cofactor>
</comment>
<comment type="subcellular location">
    <subcellularLocation>
        <location evidence="1">Cytoplasm</location>
    </subcellularLocation>
</comment>
<comment type="similarity">
    <text evidence="1">Belongs to the polyribonucleotide nucleotidyltransferase family.</text>
</comment>
<organism>
    <name type="scientific">Paenarthrobacter aurescens (strain TC1)</name>
    <dbReference type="NCBI Taxonomy" id="290340"/>
    <lineage>
        <taxon>Bacteria</taxon>
        <taxon>Bacillati</taxon>
        <taxon>Actinomycetota</taxon>
        <taxon>Actinomycetes</taxon>
        <taxon>Micrococcales</taxon>
        <taxon>Micrococcaceae</taxon>
        <taxon>Paenarthrobacter</taxon>
    </lineage>
</organism>
<protein>
    <recommendedName>
        <fullName evidence="1">Polyribonucleotide nucleotidyltransferase</fullName>
        <ecNumber evidence="1">2.7.7.8</ecNumber>
    </recommendedName>
    <alternativeName>
        <fullName evidence="1">Polynucleotide phosphorylase</fullName>
        <shortName evidence="1">PNPase</shortName>
    </alternativeName>
</protein>
<accession>A1R525</accession>
<name>PNP_PAEAT</name>
<dbReference type="EC" id="2.7.7.8" evidence="1"/>
<dbReference type="EMBL" id="CP000474">
    <property type="protein sequence ID" value="ABM06299.1"/>
    <property type="molecule type" value="Genomic_DNA"/>
</dbReference>
<dbReference type="RefSeq" id="WP_011774282.1">
    <property type="nucleotide sequence ID" value="NC_008711.1"/>
</dbReference>
<dbReference type="SMR" id="A1R525"/>
<dbReference type="STRING" id="290340.AAur_1570"/>
<dbReference type="KEGG" id="aau:AAur_1570"/>
<dbReference type="eggNOG" id="COG1185">
    <property type="taxonomic scope" value="Bacteria"/>
</dbReference>
<dbReference type="HOGENOM" id="CLU_004217_2_2_11"/>
<dbReference type="OrthoDB" id="9804305at2"/>
<dbReference type="Proteomes" id="UP000000637">
    <property type="component" value="Chromosome"/>
</dbReference>
<dbReference type="GO" id="GO:0005829">
    <property type="term" value="C:cytosol"/>
    <property type="evidence" value="ECO:0007669"/>
    <property type="project" value="TreeGrafter"/>
</dbReference>
<dbReference type="GO" id="GO:0000175">
    <property type="term" value="F:3'-5'-RNA exonuclease activity"/>
    <property type="evidence" value="ECO:0007669"/>
    <property type="project" value="TreeGrafter"/>
</dbReference>
<dbReference type="GO" id="GO:0000287">
    <property type="term" value="F:magnesium ion binding"/>
    <property type="evidence" value="ECO:0007669"/>
    <property type="project" value="UniProtKB-UniRule"/>
</dbReference>
<dbReference type="GO" id="GO:0004654">
    <property type="term" value="F:polyribonucleotide nucleotidyltransferase activity"/>
    <property type="evidence" value="ECO:0007669"/>
    <property type="project" value="UniProtKB-UniRule"/>
</dbReference>
<dbReference type="GO" id="GO:0003723">
    <property type="term" value="F:RNA binding"/>
    <property type="evidence" value="ECO:0007669"/>
    <property type="project" value="UniProtKB-UniRule"/>
</dbReference>
<dbReference type="GO" id="GO:0006402">
    <property type="term" value="P:mRNA catabolic process"/>
    <property type="evidence" value="ECO:0007669"/>
    <property type="project" value="UniProtKB-UniRule"/>
</dbReference>
<dbReference type="GO" id="GO:0006396">
    <property type="term" value="P:RNA processing"/>
    <property type="evidence" value="ECO:0007669"/>
    <property type="project" value="InterPro"/>
</dbReference>
<dbReference type="CDD" id="cd02393">
    <property type="entry name" value="KH-I_PNPase"/>
    <property type="match status" value="1"/>
</dbReference>
<dbReference type="CDD" id="cd11364">
    <property type="entry name" value="RNase_PH_PNPase_2"/>
    <property type="match status" value="1"/>
</dbReference>
<dbReference type="FunFam" id="2.40.50.140:FF:000069">
    <property type="entry name" value="Polyribonucleotide nucleotidyltransferase"/>
    <property type="match status" value="1"/>
</dbReference>
<dbReference type="FunFam" id="3.30.1370.10:FF:000001">
    <property type="entry name" value="Polyribonucleotide nucleotidyltransferase"/>
    <property type="match status" value="1"/>
</dbReference>
<dbReference type="FunFam" id="3.30.230.70:FF:000001">
    <property type="entry name" value="Polyribonucleotide nucleotidyltransferase"/>
    <property type="match status" value="1"/>
</dbReference>
<dbReference type="FunFam" id="3.30.230.70:FF:000002">
    <property type="entry name" value="Polyribonucleotide nucleotidyltransferase"/>
    <property type="match status" value="1"/>
</dbReference>
<dbReference type="Gene3D" id="3.30.230.70">
    <property type="entry name" value="GHMP Kinase, N-terminal domain"/>
    <property type="match status" value="2"/>
</dbReference>
<dbReference type="Gene3D" id="3.30.1370.10">
    <property type="entry name" value="K Homology domain, type 1"/>
    <property type="match status" value="1"/>
</dbReference>
<dbReference type="Gene3D" id="2.40.50.140">
    <property type="entry name" value="Nucleic acid-binding proteins"/>
    <property type="match status" value="1"/>
</dbReference>
<dbReference type="HAMAP" id="MF_01595">
    <property type="entry name" value="PNPase"/>
    <property type="match status" value="1"/>
</dbReference>
<dbReference type="InterPro" id="IPR001247">
    <property type="entry name" value="ExoRNase_PH_dom1"/>
</dbReference>
<dbReference type="InterPro" id="IPR036345">
    <property type="entry name" value="ExoRNase_PH_dom2_sf"/>
</dbReference>
<dbReference type="InterPro" id="IPR014069">
    <property type="entry name" value="GPSI/PNP"/>
</dbReference>
<dbReference type="InterPro" id="IPR004087">
    <property type="entry name" value="KH_dom"/>
</dbReference>
<dbReference type="InterPro" id="IPR004088">
    <property type="entry name" value="KH_dom_type_1"/>
</dbReference>
<dbReference type="InterPro" id="IPR036612">
    <property type="entry name" value="KH_dom_type_1_sf"/>
</dbReference>
<dbReference type="InterPro" id="IPR012340">
    <property type="entry name" value="NA-bd_OB-fold"/>
</dbReference>
<dbReference type="InterPro" id="IPR012162">
    <property type="entry name" value="PNPase"/>
</dbReference>
<dbReference type="InterPro" id="IPR027408">
    <property type="entry name" value="PNPase/RNase_PH_dom_sf"/>
</dbReference>
<dbReference type="InterPro" id="IPR015848">
    <property type="entry name" value="PNPase_PH_RNA-bd_bac/org-type"/>
</dbReference>
<dbReference type="InterPro" id="IPR036456">
    <property type="entry name" value="PNPase_PH_RNA-bd_sf"/>
</dbReference>
<dbReference type="InterPro" id="IPR020568">
    <property type="entry name" value="Ribosomal_Su5_D2-typ_SF"/>
</dbReference>
<dbReference type="InterPro" id="IPR003029">
    <property type="entry name" value="S1_domain"/>
</dbReference>
<dbReference type="NCBIfam" id="TIGR03591">
    <property type="entry name" value="polynuc_phos"/>
    <property type="match status" value="1"/>
</dbReference>
<dbReference type="NCBIfam" id="TIGR02696">
    <property type="entry name" value="pppGpp_PNP"/>
    <property type="match status" value="1"/>
</dbReference>
<dbReference type="NCBIfam" id="NF008805">
    <property type="entry name" value="PRK11824.1"/>
    <property type="match status" value="1"/>
</dbReference>
<dbReference type="PANTHER" id="PTHR11252">
    <property type="entry name" value="POLYRIBONUCLEOTIDE NUCLEOTIDYLTRANSFERASE"/>
    <property type="match status" value="1"/>
</dbReference>
<dbReference type="PANTHER" id="PTHR11252:SF0">
    <property type="entry name" value="POLYRIBONUCLEOTIDE NUCLEOTIDYLTRANSFERASE 1, MITOCHONDRIAL"/>
    <property type="match status" value="1"/>
</dbReference>
<dbReference type="Pfam" id="PF00013">
    <property type="entry name" value="KH_1"/>
    <property type="match status" value="1"/>
</dbReference>
<dbReference type="Pfam" id="PF03726">
    <property type="entry name" value="PNPase"/>
    <property type="match status" value="1"/>
</dbReference>
<dbReference type="Pfam" id="PF01138">
    <property type="entry name" value="RNase_PH"/>
    <property type="match status" value="2"/>
</dbReference>
<dbReference type="Pfam" id="PF00575">
    <property type="entry name" value="S1"/>
    <property type="match status" value="1"/>
</dbReference>
<dbReference type="PIRSF" id="PIRSF005499">
    <property type="entry name" value="PNPase"/>
    <property type="match status" value="1"/>
</dbReference>
<dbReference type="SMART" id="SM00322">
    <property type="entry name" value="KH"/>
    <property type="match status" value="1"/>
</dbReference>
<dbReference type="SMART" id="SM00316">
    <property type="entry name" value="S1"/>
    <property type="match status" value="1"/>
</dbReference>
<dbReference type="SUPFAM" id="SSF54791">
    <property type="entry name" value="Eukaryotic type KH-domain (KH-domain type I)"/>
    <property type="match status" value="1"/>
</dbReference>
<dbReference type="SUPFAM" id="SSF50249">
    <property type="entry name" value="Nucleic acid-binding proteins"/>
    <property type="match status" value="1"/>
</dbReference>
<dbReference type="SUPFAM" id="SSF46915">
    <property type="entry name" value="Polynucleotide phosphorylase/guanosine pentaphosphate synthase (PNPase/GPSI), domain 3"/>
    <property type="match status" value="1"/>
</dbReference>
<dbReference type="SUPFAM" id="SSF55666">
    <property type="entry name" value="Ribonuclease PH domain 2-like"/>
    <property type="match status" value="2"/>
</dbReference>
<dbReference type="SUPFAM" id="SSF54211">
    <property type="entry name" value="Ribosomal protein S5 domain 2-like"/>
    <property type="match status" value="2"/>
</dbReference>
<dbReference type="PROSITE" id="PS50084">
    <property type="entry name" value="KH_TYPE_1"/>
    <property type="match status" value="1"/>
</dbReference>
<dbReference type="PROSITE" id="PS50126">
    <property type="entry name" value="S1"/>
    <property type="match status" value="1"/>
</dbReference>